<gene>
    <name type="primary">rpl24</name>
</gene>
<dbReference type="EMBL" id="AY099532">
    <property type="protein sequence ID" value="AAM28220.1"/>
    <property type="molecule type" value="mRNA"/>
</dbReference>
<dbReference type="EMBL" id="BC059530">
    <property type="protein sequence ID" value="AAH59530.1"/>
    <property type="molecule type" value="mRNA"/>
</dbReference>
<dbReference type="RefSeq" id="NP_775342.2">
    <property type="nucleotide sequence ID" value="NM_173235.3"/>
</dbReference>
<dbReference type="SMR" id="Q8JGR4"/>
<dbReference type="BioGRID" id="79702">
    <property type="interactions" value="1"/>
</dbReference>
<dbReference type="FunCoup" id="Q8JGR4">
    <property type="interactions" value="2384"/>
</dbReference>
<dbReference type="STRING" id="7955.ENSDARP00000135555"/>
<dbReference type="PaxDb" id="7955-ENSDARP00000126732"/>
<dbReference type="GeneID" id="192301"/>
<dbReference type="KEGG" id="dre:192301"/>
<dbReference type="AGR" id="ZFIN:ZDB-GENE-020419-25"/>
<dbReference type="CTD" id="6152"/>
<dbReference type="ZFIN" id="ZDB-GENE-020419-25">
    <property type="gene designation" value="rpl24"/>
</dbReference>
<dbReference type="eggNOG" id="KOG1722">
    <property type="taxonomic scope" value="Eukaryota"/>
</dbReference>
<dbReference type="InParanoid" id="Q8JGR4"/>
<dbReference type="OrthoDB" id="1727108at2759"/>
<dbReference type="PhylomeDB" id="Q8JGR4"/>
<dbReference type="Reactome" id="R-DRE-156827">
    <property type="pathway name" value="L13a-mediated translational silencing of Ceruloplasmin expression"/>
</dbReference>
<dbReference type="Reactome" id="R-DRE-1799339">
    <property type="pathway name" value="SRP-dependent cotranslational protein targeting to membrane"/>
</dbReference>
<dbReference type="Reactome" id="R-DRE-72689">
    <property type="pathway name" value="Formation of a pool of free 40S subunits"/>
</dbReference>
<dbReference type="Reactome" id="R-DRE-975956">
    <property type="pathway name" value="Nonsense Mediated Decay (NMD) independent of the Exon Junction Complex (EJC)"/>
</dbReference>
<dbReference type="Reactome" id="R-DRE-975957">
    <property type="pathway name" value="Nonsense Mediated Decay (NMD) enhanced by the Exon Junction Complex (EJC)"/>
</dbReference>
<dbReference type="PRO" id="PR:Q8JGR4"/>
<dbReference type="Proteomes" id="UP000000437">
    <property type="component" value="Chromosome 1"/>
</dbReference>
<dbReference type="GO" id="GO:0022625">
    <property type="term" value="C:cytosolic large ribosomal subunit"/>
    <property type="evidence" value="ECO:0000318"/>
    <property type="project" value="GO_Central"/>
</dbReference>
<dbReference type="GO" id="GO:0003729">
    <property type="term" value="F:mRNA binding"/>
    <property type="evidence" value="ECO:0000318"/>
    <property type="project" value="GO_Central"/>
</dbReference>
<dbReference type="GO" id="GO:0003735">
    <property type="term" value="F:structural constituent of ribosome"/>
    <property type="evidence" value="ECO:0000250"/>
    <property type="project" value="UniProtKB"/>
</dbReference>
<dbReference type="GO" id="GO:0043009">
    <property type="term" value="P:chordate embryonic development"/>
    <property type="evidence" value="ECO:0000315"/>
    <property type="project" value="ZFIN"/>
</dbReference>
<dbReference type="GO" id="GO:0002181">
    <property type="term" value="P:cytoplasmic translation"/>
    <property type="evidence" value="ECO:0000250"/>
    <property type="project" value="UniProtKB"/>
</dbReference>
<dbReference type="CDD" id="cd00472">
    <property type="entry name" value="Ribosomal_L24e_L24"/>
    <property type="match status" value="1"/>
</dbReference>
<dbReference type="FunFam" id="2.30.170.20:FF:000004">
    <property type="entry name" value="60S ribosomal protein l24"/>
    <property type="match status" value="1"/>
</dbReference>
<dbReference type="Gene3D" id="6.10.250.1270">
    <property type="match status" value="1"/>
</dbReference>
<dbReference type="Gene3D" id="2.30.170.20">
    <property type="entry name" value="Ribosomal protein L24e"/>
    <property type="match status" value="1"/>
</dbReference>
<dbReference type="InterPro" id="IPR038630">
    <property type="entry name" value="L24e/L24_sf"/>
</dbReference>
<dbReference type="InterPro" id="IPR056366">
    <property type="entry name" value="Ribosomal_eL24"/>
</dbReference>
<dbReference type="InterPro" id="IPR000988">
    <property type="entry name" value="Ribosomal_eL24-rel_N"/>
</dbReference>
<dbReference type="InterPro" id="IPR023442">
    <property type="entry name" value="Ribosomal_eL24_CS"/>
</dbReference>
<dbReference type="InterPro" id="IPR011017">
    <property type="entry name" value="TRASH_dom"/>
</dbReference>
<dbReference type="PANTHER" id="PTHR10792">
    <property type="entry name" value="60S RIBOSOMAL PROTEIN L24"/>
    <property type="match status" value="1"/>
</dbReference>
<dbReference type="PANTHER" id="PTHR10792:SF1">
    <property type="entry name" value="RIBOSOMAL PROTEIN L24"/>
    <property type="match status" value="1"/>
</dbReference>
<dbReference type="Pfam" id="PF01246">
    <property type="entry name" value="Ribosomal_L24e"/>
    <property type="match status" value="1"/>
</dbReference>
<dbReference type="SMART" id="SM00746">
    <property type="entry name" value="TRASH"/>
    <property type="match status" value="1"/>
</dbReference>
<dbReference type="SUPFAM" id="SSF57716">
    <property type="entry name" value="Glucocorticoid receptor-like (DNA-binding domain)"/>
    <property type="match status" value="1"/>
</dbReference>
<dbReference type="PROSITE" id="PS01073">
    <property type="entry name" value="RIBOSOMAL_L24E"/>
    <property type="match status" value="1"/>
</dbReference>
<accession>Q8JGR4</accession>
<accession>Q6PBZ4</accession>
<proteinExistence type="evidence at transcript level"/>
<name>RL24_DANRE</name>
<feature type="chain" id="PRO_0000136871" description="Large ribosomal subunit protein eL24">
    <location>
        <begin position="1"/>
        <end position="157"/>
    </location>
</feature>
<feature type="region of interest" description="Disordered" evidence="2">
    <location>
        <begin position="95"/>
        <end position="157"/>
    </location>
</feature>
<feature type="compositionally biased region" description="Basic and acidic residues" evidence="2">
    <location>
        <begin position="96"/>
        <end position="117"/>
    </location>
</feature>
<feature type="compositionally biased region" description="Low complexity" evidence="2">
    <location>
        <begin position="123"/>
        <end position="145"/>
    </location>
</feature>
<feature type="sequence conflict" description="In Ref. 2; AAH59530." evidence="4" ref="2">
    <original>V</original>
    <variation>I</variation>
    <location>
        <position position="24"/>
    </location>
</feature>
<sequence>MKVELCSFSGYKIYPGHGRRYARVDGKVFQFLNAKCESAFLSKRNPRQINWTVLYRRKHKKGQSEEVSKKRTRRAVKFQRAITGASLAEILAKRNQKPEVRKAQREQAIRAAKEAKKAKQATKKQTTQSSKAPAKSAQKQKIAKPMKVSAPRVGGKR</sequence>
<organism>
    <name type="scientific">Danio rerio</name>
    <name type="common">Zebrafish</name>
    <name type="synonym">Brachydanio rerio</name>
    <dbReference type="NCBI Taxonomy" id="7955"/>
    <lineage>
        <taxon>Eukaryota</taxon>
        <taxon>Metazoa</taxon>
        <taxon>Chordata</taxon>
        <taxon>Craniata</taxon>
        <taxon>Vertebrata</taxon>
        <taxon>Euteleostomi</taxon>
        <taxon>Actinopterygii</taxon>
        <taxon>Neopterygii</taxon>
        <taxon>Teleostei</taxon>
        <taxon>Ostariophysi</taxon>
        <taxon>Cypriniformes</taxon>
        <taxon>Danionidae</taxon>
        <taxon>Danioninae</taxon>
        <taxon>Danio</taxon>
    </lineage>
</organism>
<evidence type="ECO:0000250" key="1">
    <source>
        <dbReference type="UniProtKB" id="P83731"/>
    </source>
</evidence>
<evidence type="ECO:0000256" key="2">
    <source>
        <dbReference type="SAM" id="MobiDB-lite"/>
    </source>
</evidence>
<evidence type="ECO:0000269" key="3">
    <source>
    </source>
</evidence>
<evidence type="ECO:0000305" key="4"/>
<comment type="function">
    <text evidence="1 3">Component of the large ribosomal subunit. The ribosome is a large ribonucleoprotein complex responsible for the synthesis of proteins in the cell (By similarity). Plays an essential role in early embryonic development (PubMed:12006978).</text>
</comment>
<comment type="subunit">
    <text evidence="1">Component of the large ribosomal subunit.</text>
</comment>
<comment type="subcellular location">
    <subcellularLocation>
        <location evidence="1">Cytoplasm</location>
    </subcellularLocation>
</comment>
<comment type="disruption phenotype">
    <text evidence="3">Embryos show various defects including smaller head and eyes.</text>
</comment>
<comment type="similarity">
    <text evidence="4">Belongs to the eukaryotic ribosomal protein eL24 family.</text>
</comment>
<reference key="1">
    <citation type="journal article" date="2002" name="Nat. Genet.">
        <title>Insertional mutagenesis in zebrafish rapidly identifies genes essential for early vertebrate development.</title>
        <authorList>
            <person name="Golling G."/>
            <person name="Amsterdam A."/>
            <person name="Sun Z."/>
            <person name="Antonelli M."/>
            <person name="Maldonado E."/>
            <person name="Chen W."/>
            <person name="Burgess S."/>
            <person name="Haldi M."/>
            <person name="Artzt K."/>
            <person name="Farrington S."/>
            <person name="Lin S.-Y."/>
            <person name="Nissen R.M."/>
            <person name="Hopkins N."/>
        </authorList>
    </citation>
    <scope>NUCLEOTIDE SEQUENCE [LARGE SCALE MRNA]</scope>
    <scope>FUNCTION</scope>
    <scope>DISRUPTION PHENOTYPE</scope>
    <source>
        <tissue>Embryo</tissue>
    </source>
</reference>
<reference key="2">
    <citation type="submission" date="2003-10" db="EMBL/GenBank/DDBJ databases">
        <authorList>
            <consortium name="NIH - Zebrafish Gene Collection (ZGC) project"/>
        </authorList>
    </citation>
    <scope>NUCLEOTIDE SEQUENCE [LARGE SCALE MRNA]</scope>
    <source>
        <tissue>Eye</tissue>
    </source>
</reference>
<protein>
    <recommendedName>
        <fullName evidence="4">Large ribosomal subunit protein eL24</fullName>
    </recommendedName>
    <alternativeName>
        <fullName>60S ribosomal protein L24</fullName>
    </alternativeName>
</protein>
<keyword id="KW-0963">Cytoplasm</keyword>
<keyword id="KW-0217">Developmental protein</keyword>
<keyword id="KW-1185">Reference proteome</keyword>
<keyword id="KW-0687">Ribonucleoprotein</keyword>
<keyword id="KW-0689">Ribosomal protein</keyword>